<name>RIMM_CAMJD</name>
<proteinExistence type="inferred from homology"/>
<comment type="function">
    <text evidence="1">An accessory protein needed during the final step in the assembly of 30S ribosomal subunit, possibly for assembly of the head region. Essential for efficient processing of 16S rRNA. May be needed both before and after RbfA during the maturation of 16S rRNA. It has affinity for free ribosomal 30S subunits but not for 70S ribosomes.</text>
</comment>
<comment type="subunit">
    <text evidence="1">Binds ribosomal protein uS19.</text>
</comment>
<comment type="subcellular location">
    <subcellularLocation>
        <location evidence="1">Cytoplasm</location>
    </subcellularLocation>
</comment>
<comment type="domain">
    <text evidence="1">The PRC barrel domain binds ribosomal protein uS19.</text>
</comment>
<comment type="similarity">
    <text evidence="1">Belongs to the RimM family.</text>
</comment>
<protein>
    <recommendedName>
        <fullName evidence="1">Ribosome maturation factor RimM</fullName>
    </recommendedName>
</protein>
<sequence>MSEKDFVQVAKLGKTVGLKGYVKLHNLSDFSSQFKKDATFFIKNTKEMLKIKHYNASNSTVLFENYEDIEKAKELTNLILFQSIEKSRQTCKLKKDEFFYFDILECEVFEEDKRLGKVVDILETGASYLFEIQSDEKWVEKKYPKIFFIPYLDKFVKNIDIEKRQIFCTQDAFLILENS</sequence>
<feature type="chain" id="PRO_1000001159" description="Ribosome maturation factor RimM">
    <location>
        <begin position="1"/>
        <end position="179"/>
    </location>
</feature>
<feature type="domain" description="PRC barrel" evidence="1">
    <location>
        <begin position="95"/>
        <end position="174"/>
    </location>
</feature>
<reference key="1">
    <citation type="submission" date="2007-07" db="EMBL/GenBank/DDBJ databases">
        <title>Complete genome sequence of Campylobacter jejuni subsp doylei 269.97 isolated from human blood.</title>
        <authorList>
            <person name="Fouts D.E."/>
            <person name="Mongodin E.F."/>
            <person name="Puiu D."/>
            <person name="Sebastian Y."/>
            <person name="Miller W.G."/>
            <person name="Mandrell R.E."/>
            <person name="Lastovica A.J."/>
            <person name="Nelson K.E."/>
        </authorList>
    </citation>
    <scope>NUCLEOTIDE SEQUENCE [LARGE SCALE GENOMIC DNA]</scope>
    <source>
        <strain>ATCC BAA-1458 / RM4099 / 269.97</strain>
    </source>
</reference>
<dbReference type="EMBL" id="CP000768">
    <property type="protein sequence ID" value="ABS43447.1"/>
    <property type="molecule type" value="Genomic_DNA"/>
</dbReference>
<dbReference type="SMR" id="A7H4B3"/>
<dbReference type="KEGG" id="cjd:JJD26997_1294"/>
<dbReference type="HOGENOM" id="CLU_077636_2_0_7"/>
<dbReference type="Proteomes" id="UP000002302">
    <property type="component" value="Chromosome"/>
</dbReference>
<dbReference type="GO" id="GO:0005737">
    <property type="term" value="C:cytoplasm"/>
    <property type="evidence" value="ECO:0007669"/>
    <property type="project" value="UniProtKB-SubCell"/>
</dbReference>
<dbReference type="GO" id="GO:0005840">
    <property type="term" value="C:ribosome"/>
    <property type="evidence" value="ECO:0007669"/>
    <property type="project" value="InterPro"/>
</dbReference>
<dbReference type="GO" id="GO:0043022">
    <property type="term" value="F:ribosome binding"/>
    <property type="evidence" value="ECO:0007669"/>
    <property type="project" value="InterPro"/>
</dbReference>
<dbReference type="GO" id="GO:0042274">
    <property type="term" value="P:ribosomal small subunit biogenesis"/>
    <property type="evidence" value="ECO:0007669"/>
    <property type="project" value="UniProtKB-UniRule"/>
</dbReference>
<dbReference type="GO" id="GO:0006364">
    <property type="term" value="P:rRNA processing"/>
    <property type="evidence" value="ECO:0007669"/>
    <property type="project" value="UniProtKB-UniRule"/>
</dbReference>
<dbReference type="Gene3D" id="2.30.30.240">
    <property type="entry name" value="PRC-barrel domain"/>
    <property type="match status" value="1"/>
</dbReference>
<dbReference type="Gene3D" id="2.40.30.60">
    <property type="entry name" value="RimM"/>
    <property type="match status" value="1"/>
</dbReference>
<dbReference type="HAMAP" id="MF_00014">
    <property type="entry name" value="Ribosome_mat_RimM"/>
    <property type="match status" value="1"/>
</dbReference>
<dbReference type="InterPro" id="IPR027275">
    <property type="entry name" value="PRC-brl_dom"/>
</dbReference>
<dbReference type="InterPro" id="IPR011033">
    <property type="entry name" value="PRC_barrel-like_sf"/>
</dbReference>
<dbReference type="InterPro" id="IPR011961">
    <property type="entry name" value="RimM"/>
</dbReference>
<dbReference type="InterPro" id="IPR002676">
    <property type="entry name" value="RimM_N"/>
</dbReference>
<dbReference type="InterPro" id="IPR036976">
    <property type="entry name" value="RimM_N_sf"/>
</dbReference>
<dbReference type="InterPro" id="IPR009000">
    <property type="entry name" value="Transl_B-barrel_sf"/>
</dbReference>
<dbReference type="NCBIfam" id="TIGR02273">
    <property type="entry name" value="16S_RimM"/>
    <property type="match status" value="1"/>
</dbReference>
<dbReference type="PANTHER" id="PTHR33692">
    <property type="entry name" value="RIBOSOME MATURATION FACTOR RIMM"/>
    <property type="match status" value="1"/>
</dbReference>
<dbReference type="PANTHER" id="PTHR33692:SF1">
    <property type="entry name" value="RIBOSOME MATURATION FACTOR RIMM"/>
    <property type="match status" value="1"/>
</dbReference>
<dbReference type="Pfam" id="PF05239">
    <property type="entry name" value="PRC"/>
    <property type="match status" value="1"/>
</dbReference>
<dbReference type="Pfam" id="PF01782">
    <property type="entry name" value="RimM"/>
    <property type="match status" value="1"/>
</dbReference>
<dbReference type="SUPFAM" id="SSF50346">
    <property type="entry name" value="PRC-barrel domain"/>
    <property type="match status" value="1"/>
</dbReference>
<dbReference type="SUPFAM" id="SSF50447">
    <property type="entry name" value="Translation proteins"/>
    <property type="match status" value="1"/>
</dbReference>
<organism>
    <name type="scientific">Campylobacter jejuni subsp. doylei (strain ATCC BAA-1458 / RM4099 / 269.97)</name>
    <dbReference type="NCBI Taxonomy" id="360109"/>
    <lineage>
        <taxon>Bacteria</taxon>
        <taxon>Pseudomonadati</taxon>
        <taxon>Campylobacterota</taxon>
        <taxon>Epsilonproteobacteria</taxon>
        <taxon>Campylobacterales</taxon>
        <taxon>Campylobacteraceae</taxon>
        <taxon>Campylobacter</taxon>
    </lineage>
</organism>
<keyword id="KW-0143">Chaperone</keyword>
<keyword id="KW-0963">Cytoplasm</keyword>
<keyword id="KW-0690">Ribosome biogenesis</keyword>
<keyword id="KW-0698">rRNA processing</keyword>
<evidence type="ECO:0000255" key="1">
    <source>
        <dbReference type="HAMAP-Rule" id="MF_00014"/>
    </source>
</evidence>
<accession>A7H4B3</accession>
<gene>
    <name evidence="1" type="primary">rimM</name>
    <name type="ordered locus">JJD26997_1294</name>
</gene>